<evidence type="ECO:0000255" key="1">
    <source>
        <dbReference type="HAMAP-Rule" id="MF_01496"/>
    </source>
</evidence>
<name>PSBC_WELMI</name>
<keyword id="KW-0007">Acetylation</keyword>
<keyword id="KW-0148">Chlorophyll</keyword>
<keyword id="KW-0150">Chloroplast</keyword>
<keyword id="KW-0157">Chromophore</keyword>
<keyword id="KW-0464">Manganese</keyword>
<keyword id="KW-0472">Membrane</keyword>
<keyword id="KW-0479">Metal-binding</keyword>
<keyword id="KW-0597">Phosphoprotein</keyword>
<keyword id="KW-0602">Photosynthesis</keyword>
<keyword id="KW-0604">Photosystem II</keyword>
<keyword id="KW-0934">Plastid</keyword>
<keyword id="KW-0793">Thylakoid</keyword>
<keyword id="KW-0812">Transmembrane</keyword>
<keyword id="KW-1133">Transmembrane helix</keyword>
<protein>
    <recommendedName>
        <fullName evidence="1">Photosystem II CP43 reaction center protein</fullName>
    </recommendedName>
    <alternativeName>
        <fullName evidence="1">PSII 43 kDa protein</fullName>
    </alternativeName>
    <alternativeName>
        <fullName evidence="1">Protein CP-43</fullName>
    </alternativeName>
</protein>
<geneLocation type="chloroplast"/>
<reference key="1">
    <citation type="journal article" date="2008" name="BMC Evol. Biol.">
        <title>The complete plastid genome sequence of Welwitschia mirabilis: an unusually compact plastome with accelerated divergence rates.</title>
        <authorList>
            <person name="McCoy S.R."/>
            <person name="Kuehl J.V."/>
            <person name="Boore J.L."/>
            <person name="Raubeson L.A."/>
        </authorList>
    </citation>
    <scope>NUCLEOTIDE SEQUENCE [LARGE SCALE GENOMIC DNA]</scope>
</reference>
<reference key="2">
    <citation type="journal article" date="2009" name="Mol. Phylogenet. Evol.">
        <title>Evolution of reduced and compact chloroplast genomes (cpDNAs) in gnetophytes: Selection toward a lower-cost strategy.</title>
        <authorList>
            <person name="Wu C.-S."/>
            <person name="Lai Y.-T."/>
            <person name="Lin C.-P."/>
            <person name="Wang Y.-N."/>
            <person name="Chaw S.-M."/>
        </authorList>
    </citation>
    <scope>NUCLEOTIDE SEQUENCE [LARGE SCALE GENOMIC DNA]</scope>
</reference>
<sequence length="473" mass="51951">MKTLYSPRRFYPVETLFNGTLTLAGRDQETTGFAWWAGNARLINLSGKLLGAHVAHAGLIVFWAGAMNLFEVAHFIPEKPMYEQGLILLPHLATLGWGVGPGGEIVDTFPYFVSGILHLISSAVLGFGGIYHALIGPETLEESFPFFGYAWKDRNKMTTILGIHLILLGAGAFLLVLKALFFGGIYDTWAPGGGDVRKITNLTLSPNTIFGFLLKSPFGGEGWIVSVDNLEDIIGGHFWLGSMCIFGGIWHILTKPFAWTRRAFVWSGEAYLSYSLAALSVFGFIACCFVWFNNTAYPSEFYGPTGPEASQAQAFTFLVRDQRLGASVGSAQGPTGLGKYLMRSPTGEIIFGGETMRFWDLRAPWLEPLRGPNGLDLSKLKKDIQPWQERRSAEYMTHAPLGSLNSVGGVATEINAVNFVSPRSWLATSHFVLGFFFFVGHLWHAGRARAAAAGFEKGIDRDLEPVLFMTPLN</sequence>
<feature type="propeptide" id="PRO_0000431217" evidence="1">
    <location>
        <begin position="1"/>
        <end position="14"/>
    </location>
</feature>
<feature type="chain" id="PRO_0000361509" description="Photosystem II CP43 reaction center protein" evidence="1">
    <location>
        <begin position="15"/>
        <end position="473"/>
    </location>
</feature>
<feature type="transmembrane region" description="Helical" evidence="1">
    <location>
        <begin position="69"/>
        <end position="93"/>
    </location>
</feature>
<feature type="transmembrane region" description="Helical" evidence="1">
    <location>
        <begin position="134"/>
        <end position="155"/>
    </location>
</feature>
<feature type="transmembrane region" description="Helical" evidence="1">
    <location>
        <begin position="178"/>
        <end position="200"/>
    </location>
</feature>
<feature type="transmembrane region" description="Helical" evidence="1">
    <location>
        <begin position="255"/>
        <end position="275"/>
    </location>
</feature>
<feature type="transmembrane region" description="Helical" evidence="1">
    <location>
        <begin position="291"/>
        <end position="312"/>
    </location>
</feature>
<feature type="transmembrane region" description="Helical" evidence="1">
    <location>
        <begin position="447"/>
        <end position="471"/>
    </location>
</feature>
<feature type="binding site" evidence="1">
    <location>
        <position position="367"/>
    </location>
    <ligand>
        <name>[CaMn4O5] cluster</name>
        <dbReference type="ChEBI" id="CHEBI:189552"/>
    </ligand>
</feature>
<feature type="modified residue" description="N-acetylthreonine" evidence="1">
    <location>
        <position position="15"/>
    </location>
</feature>
<feature type="modified residue" description="Phosphothreonine" evidence="1">
    <location>
        <position position="15"/>
    </location>
</feature>
<accession>B2Y1U6</accession>
<accession>B7ZHZ3</accession>
<organism>
    <name type="scientific">Welwitschia mirabilis</name>
    <name type="common">Tree tumbo</name>
    <name type="synonym">Welwitschia bainesii</name>
    <dbReference type="NCBI Taxonomy" id="3377"/>
    <lineage>
        <taxon>Eukaryota</taxon>
        <taxon>Viridiplantae</taxon>
        <taxon>Streptophyta</taxon>
        <taxon>Embryophyta</taxon>
        <taxon>Tracheophyta</taxon>
        <taxon>Spermatophyta</taxon>
        <taxon>Gnetopsida</taxon>
        <taxon>Gnetidae</taxon>
        <taxon>Welwitschiales</taxon>
        <taxon>Welwitschiaceae</taxon>
        <taxon>Welwitschia</taxon>
    </lineage>
</organism>
<dbReference type="EMBL" id="EU342371">
    <property type="protein sequence ID" value="ABY26776.1"/>
    <property type="molecule type" value="Genomic_DNA"/>
</dbReference>
<dbReference type="EMBL" id="AP009568">
    <property type="protein sequence ID" value="BAH11173.1"/>
    <property type="molecule type" value="Genomic_DNA"/>
</dbReference>
<dbReference type="RefSeq" id="YP_001876563.1">
    <property type="nucleotide sequence ID" value="NC_010654.1"/>
</dbReference>
<dbReference type="SMR" id="B2Y1U6"/>
<dbReference type="GeneID" id="6276211"/>
<dbReference type="GO" id="GO:0009535">
    <property type="term" value="C:chloroplast thylakoid membrane"/>
    <property type="evidence" value="ECO:0007669"/>
    <property type="project" value="UniProtKB-SubCell"/>
</dbReference>
<dbReference type="GO" id="GO:0009523">
    <property type="term" value="C:photosystem II"/>
    <property type="evidence" value="ECO:0007669"/>
    <property type="project" value="UniProtKB-KW"/>
</dbReference>
<dbReference type="GO" id="GO:0016168">
    <property type="term" value="F:chlorophyll binding"/>
    <property type="evidence" value="ECO:0007669"/>
    <property type="project" value="UniProtKB-UniRule"/>
</dbReference>
<dbReference type="GO" id="GO:0045156">
    <property type="term" value="F:electron transporter, transferring electrons within the cyclic electron transport pathway of photosynthesis activity"/>
    <property type="evidence" value="ECO:0007669"/>
    <property type="project" value="InterPro"/>
</dbReference>
<dbReference type="GO" id="GO:0046872">
    <property type="term" value="F:metal ion binding"/>
    <property type="evidence" value="ECO:0007669"/>
    <property type="project" value="UniProtKB-KW"/>
</dbReference>
<dbReference type="GO" id="GO:0009772">
    <property type="term" value="P:photosynthetic electron transport in photosystem II"/>
    <property type="evidence" value="ECO:0007669"/>
    <property type="project" value="InterPro"/>
</dbReference>
<dbReference type="FunFam" id="1.10.10.670:FF:000001">
    <property type="entry name" value="Photosystem II CP43 reaction center protein"/>
    <property type="match status" value="1"/>
</dbReference>
<dbReference type="Gene3D" id="1.10.10.670">
    <property type="entry name" value="photosystem ii from thermosynechococcus elongatus"/>
    <property type="match status" value="1"/>
</dbReference>
<dbReference type="HAMAP" id="MF_01496">
    <property type="entry name" value="PSII_PsbC_CP43"/>
    <property type="match status" value="1"/>
</dbReference>
<dbReference type="InterPro" id="IPR000932">
    <property type="entry name" value="PS_antenna-like"/>
</dbReference>
<dbReference type="InterPro" id="IPR036001">
    <property type="entry name" value="PS_II_antenna-like_sf"/>
</dbReference>
<dbReference type="InterPro" id="IPR005869">
    <property type="entry name" value="PSII_PsbC"/>
</dbReference>
<dbReference type="InterPro" id="IPR044900">
    <property type="entry name" value="PSII_PsbC_sf"/>
</dbReference>
<dbReference type="NCBIfam" id="TIGR01153">
    <property type="entry name" value="psbC"/>
    <property type="match status" value="1"/>
</dbReference>
<dbReference type="Pfam" id="PF00421">
    <property type="entry name" value="PSII"/>
    <property type="match status" value="1"/>
</dbReference>
<dbReference type="SUPFAM" id="SSF161077">
    <property type="entry name" value="Photosystem II antenna protein-like"/>
    <property type="match status" value="1"/>
</dbReference>
<proteinExistence type="inferred from homology"/>
<comment type="function">
    <text evidence="1">One of the components of the core complex of photosystem II (PSII). It binds chlorophyll and helps catalyze the primary light-induced photochemical processes of PSII. PSII is a light-driven water:plastoquinone oxidoreductase, using light energy to abstract electrons from H(2)O, generating O(2) and a proton gradient subsequently used for ATP formation.</text>
</comment>
<comment type="cofactor">
    <text evidence="1">Binds multiple chlorophylls and provides some of the ligands for the Ca-4Mn-5O cluster of the oxygen-evolving complex. It may also provide a ligand for a Cl- that is required for oxygen evolution. PSII binds additional chlorophylls, carotenoids and specific lipids.</text>
</comment>
<comment type="subunit">
    <text evidence="1">PSII is composed of 1 copy each of membrane proteins PsbA, PsbB, PsbC, PsbD, PsbE, PsbF, PsbH, PsbI, PsbJ, PsbK, PsbL, PsbM, PsbT, PsbX, PsbY, PsbZ, Psb30/Ycf12, at least 3 peripheral proteins of the oxygen-evolving complex and a large number of cofactors. It forms dimeric complexes.</text>
</comment>
<comment type="subcellular location">
    <subcellularLocation>
        <location evidence="1">Plastid</location>
        <location evidence="1">Chloroplast thylakoid membrane</location>
        <topology evidence="1">Multi-pass membrane protein</topology>
    </subcellularLocation>
</comment>
<comment type="similarity">
    <text evidence="1">Belongs to the PsbB/PsbC family. PsbC subfamily.</text>
</comment>
<gene>
    <name evidence="1" type="primary">psbC</name>
</gene>